<evidence type="ECO:0000250" key="1"/>
<evidence type="ECO:0000255" key="2"/>
<evidence type="ECO:0000269" key="3">
    <source>
    </source>
</evidence>
<evidence type="ECO:0000269" key="4">
    <source>
    </source>
</evidence>
<evidence type="ECO:0000305" key="5"/>
<proteinExistence type="evidence at transcript level"/>
<reference key="1">
    <citation type="journal article" date="1999" name="Plant Mol. Biol.">
        <title>Expression of two PIP genes in rapidly growing internodes of rice is not primarily controlled by meristem activity or cell expansion.</title>
        <authorList>
            <person name="Malz S."/>
            <person name="Sauter M."/>
        </authorList>
    </citation>
    <scope>NUCLEOTIDE SEQUENCE [MRNA]</scope>
    <scope>TISSUE SPECIFICITY</scope>
    <scope>INDUCTION</scope>
    <source>
        <tissue>Meristem</tissue>
    </source>
</reference>
<reference key="2">
    <citation type="journal article" date="2005" name="Nature">
        <title>The map-based sequence of the rice genome.</title>
        <authorList>
            <consortium name="International rice genome sequencing project (IRGSP)"/>
        </authorList>
    </citation>
    <scope>NUCLEOTIDE SEQUENCE [LARGE SCALE GENOMIC DNA]</scope>
    <source>
        <strain>cv. Nipponbare</strain>
    </source>
</reference>
<reference key="3">
    <citation type="journal article" date="2008" name="Nucleic Acids Res.">
        <title>The rice annotation project database (RAP-DB): 2008 update.</title>
        <authorList>
            <consortium name="The rice annotation project (RAP)"/>
        </authorList>
    </citation>
    <scope>GENOME REANNOTATION</scope>
    <source>
        <strain>cv. Nipponbare</strain>
    </source>
</reference>
<reference key="4">
    <citation type="journal article" date="2013" name="Rice">
        <title>Improvement of the Oryza sativa Nipponbare reference genome using next generation sequence and optical map data.</title>
        <authorList>
            <person name="Kawahara Y."/>
            <person name="de la Bastide M."/>
            <person name="Hamilton J.P."/>
            <person name="Kanamori H."/>
            <person name="McCombie W.R."/>
            <person name="Ouyang S."/>
            <person name="Schwartz D.C."/>
            <person name="Tanaka T."/>
            <person name="Wu J."/>
            <person name="Zhou S."/>
            <person name="Childs K.L."/>
            <person name="Davidson R.M."/>
            <person name="Lin H."/>
            <person name="Quesada-Ocampo L."/>
            <person name="Vaillancourt B."/>
            <person name="Sakai H."/>
            <person name="Lee S.S."/>
            <person name="Kim J."/>
            <person name="Numa H."/>
            <person name="Itoh T."/>
            <person name="Buell C.R."/>
            <person name="Matsumoto T."/>
        </authorList>
    </citation>
    <scope>GENOME REANNOTATION</scope>
    <source>
        <strain>cv. Nipponbare</strain>
    </source>
</reference>
<reference key="5">
    <citation type="journal article" date="2005" name="PLoS Biol.">
        <title>The genomes of Oryza sativa: a history of duplications.</title>
        <authorList>
            <person name="Yu J."/>
            <person name="Wang J."/>
            <person name="Lin W."/>
            <person name="Li S."/>
            <person name="Li H."/>
            <person name="Zhou J."/>
            <person name="Ni P."/>
            <person name="Dong W."/>
            <person name="Hu S."/>
            <person name="Zeng C."/>
            <person name="Zhang J."/>
            <person name="Zhang Y."/>
            <person name="Li R."/>
            <person name="Xu Z."/>
            <person name="Li S."/>
            <person name="Li X."/>
            <person name="Zheng H."/>
            <person name="Cong L."/>
            <person name="Lin L."/>
            <person name="Yin J."/>
            <person name="Geng J."/>
            <person name="Li G."/>
            <person name="Shi J."/>
            <person name="Liu J."/>
            <person name="Lv H."/>
            <person name="Li J."/>
            <person name="Wang J."/>
            <person name="Deng Y."/>
            <person name="Ran L."/>
            <person name="Shi X."/>
            <person name="Wang X."/>
            <person name="Wu Q."/>
            <person name="Li C."/>
            <person name="Ren X."/>
            <person name="Wang J."/>
            <person name="Wang X."/>
            <person name="Li D."/>
            <person name="Liu D."/>
            <person name="Zhang X."/>
            <person name="Ji Z."/>
            <person name="Zhao W."/>
            <person name="Sun Y."/>
            <person name="Zhang Z."/>
            <person name="Bao J."/>
            <person name="Han Y."/>
            <person name="Dong L."/>
            <person name="Ji J."/>
            <person name="Chen P."/>
            <person name="Wu S."/>
            <person name="Liu J."/>
            <person name="Xiao Y."/>
            <person name="Bu D."/>
            <person name="Tan J."/>
            <person name="Yang L."/>
            <person name="Ye C."/>
            <person name="Zhang J."/>
            <person name="Xu J."/>
            <person name="Zhou Y."/>
            <person name="Yu Y."/>
            <person name="Zhang B."/>
            <person name="Zhuang S."/>
            <person name="Wei H."/>
            <person name="Liu B."/>
            <person name="Lei M."/>
            <person name="Yu H."/>
            <person name="Li Y."/>
            <person name="Xu H."/>
            <person name="Wei S."/>
            <person name="He X."/>
            <person name="Fang L."/>
            <person name="Zhang Z."/>
            <person name="Zhang Y."/>
            <person name="Huang X."/>
            <person name="Su Z."/>
            <person name="Tong W."/>
            <person name="Li J."/>
            <person name="Tong Z."/>
            <person name="Li S."/>
            <person name="Ye J."/>
            <person name="Wang L."/>
            <person name="Fang L."/>
            <person name="Lei T."/>
            <person name="Chen C.-S."/>
            <person name="Chen H.-C."/>
            <person name="Xu Z."/>
            <person name="Li H."/>
            <person name="Huang H."/>
            <person name="Zhang F."/>
            <person name="Xu H."/>
            <person name="Li N."/>
            <person name="Zhao C."/>
            <person name="Li S."/>
            <person name="Dong L."/>
            <person name="Huang Y."/>
            <person name="Li L."/>
            <person name="Xi Y."/>
            <person name="Qi Q."/>
            <person name="Li W."/>
            <person name="Zhang B."/>
            <person name="Hu W."/>
            <person name="Zhang Y."/>
            <person name="Tian X."/>
            <person name="Jiao Y."/>
            <person name="Liang X."/>
            <person name="Jin J."/>
            <person name="Gao L."/>
            <person name="Zheng W."/>
            <person name="Hao B."/>
            <person name="Liu S.-M."/>
            <person name="Wang W."/>
            <person name="Yuan L."/>
            <person name="Cao M."/>
            <person name="McDermott J."/>
            <person name="Samudrala R."/>
            <person name="Wang J."/>
            <person name="Wong G.K.-S."/>
            <person name="Yang H."/>
        </authorList>
    </citation>
    <scope>NUCLEOTIDE SEQUENCE [LARGE SCALE GENOMIC DNA]</scope>
    <source>
        <strain>cv. Nipponbare</strain>
    </source>
</reference>
<reference key="6">
    <citation type="journal article" date="2003" name="Science">
        <title>Collection, mapping, and annotation of over 28,000 cDNA clones from japonica rice.</title>
        <authorList>
            <consortium name="The rice full-length cDNA consortium"/>
        </authorList>
    </citation>
    <scope>NUCLEOTIDE SEQUENCE [LARGE SCALE MRNA]</scope>
    <source>
        <strain>cv. Nipponbare</strain>
    </source>
</reference>
<reference key="7">
    <citation type="journal article" date="2005" name="Plant Cell Physiol.">
        <title>Identification of 33 rice aquaporin genes and analysis of their expression and function.</title>
        <authorList>
            <person name="Sakurai J."/>
            <person name="Ishikawa F."/>
            <person name="Yamaguchi T."/>
            <person name="Uemura M."/>
            <person name="Maeshima M."/>
        </authorList>
    </citation>
    <scope>NOMENCLATURE</scope>
    <scope>TISSUE SPECIFICITY</scope>
    <scope>INDUCTION</scope>
</reference>
<comment type="function">
    <text evidence="1">Aquaporins facilitate the transport of water and small neutral solutes across cell membranes.</text>
</comment>
<comment type="subcellular location">
    <subcellularLocation>
        <location evidence="1">Cell membrane</location>
        <topology evidence="1">Multi-pass membrane protein</topology>
    </subcellularLocation>
</comment>
<comment type="tissue specificity">
    <text evidence="3 4">Expressed in roots, leaves and anthers.</text>
</comment>
<comment type="induction">
    <text evidence="3 4">Down-regulated by chilling.</text>
</comment>
<comment type="domain">
    <text>Aquaporins contain two tandem repeats each containing three membrane-spanning domains and a pore-forming loop with the signature motif Asn-Pro-Ala (NPA).</text>
</comment>
<comment type="similarity">
    <text evidence="5">Belongs to the MIP/aquaporin (TC 1.A.8) family. PIP (TC 1.A.8.11) subfamily.</text>
</comment>
<accession>Q8H5N9</accession>
<accession>A3BJC3</accession>
<accession>O65336</accession>
<accession>Q0D6R4</accession>
<gene>
    <name type="primary">PIP2-1</name>
    <name type="synonym">PIP2a</name>
    <name type="ordered locus">Os07g0448800</name>
    <name type="ordered locus">LOC_Os07g26690</name>
    <name type="ORF">OJ1047_A06.117</name>
    <name type="ORF">OsJ_023145</name>
</gene>
<keyword id="KW-1003">Cell membrane</keyword>
<keyword id="KW-0472">Membrane</keyword>
<keyword id="KW-1185">Reference proteome</keyword>
<keyword id="KW-0677">Repeat</keyword>
<keyword id="KW-0812">Transmembrane</keyword>
<keyword id="KW-1133">Transmembrane helix</keyword>
<keyword id="KW-0813">Transport</keyword>
<organism>
    <name type="scientific">Oryza sativa subsp. japonica</name>
    <name type="common">Rice</name>
    <dbReference type="NCBI Taxonomy" id="39947"/>
    <lineage>
        <taxon>Eukaryota</taxon>
        <taxon>Viridiplantae</taxon>
        <taxon>Streptophyta</taxon>
        <taxon>Embryophyta</taxon>
        <taxon>Tracheophyta</taxon>
        <taxon>Spermatophyta</taxon>
        <taxon>Magnoliopsida</taxon>
        <taxon>Liliopsida</taxon>
        <taxon>Poales</taxon>
        <taxon>Poaceae</taxon>
        <taxon>BOP clade</taxon>
        <taxon>Oryzoideae</taxon>
        <taxon>Oryzeae</taxon>
        <taxon>Oryzinae</taxon>
        <taxon>Oryza</taxon>
        <taxon>Oryza sativa</taxon>
    </lineage>
</organism>
<name>PIP21_ORYSJ</name>
<feature type="chain" id="PRO_0000064034" description="Probable aquaporin PIP2-1">
    <location>
        <begin position="1"/>
        <end position="290"/>
    </location>
</feature>
<feature type="transmembrane region" description="Helical; Name=1" evidence="2">
    <location>
        <begin position="43"/>
        <end position="63"/>
    </location>
</feature>
<feature type="transmembrane region" description="Helical; Name=2" evidence="2">
    <location>
        <begin position="80"/>
        <end position="100"/>
    </location>
</feature>
<feature type="transmembrane region" description="Helical; Name=3" evidence="2">
    <location>
        <begin position="131"/>
        <end position="151"/>
    </location>
</feature>
<feature type="transmembrane region" description="Helical; Name=4" evidence="2">
    <location>
        <begin position="173"/>
        <end position="193"/>
    </location>
</feature>
<feature type="transmembrane region" description="Helical; Name=5" evidence="2">
    <location>
        <begin position="207"/>
        <end position="227"/>
    </location>
</feature>
<feature type="transmembrane region" description="Helical; Name=6" evidence="2">
    <location>
        <begin position="255"/>
        <end position="275"/>
    </location>
</feature>
<feature type="short sequence motif" description="NPA 1">
    <location>
        <begin position="112"/>
        <end position="114"/>
    </location>
</feature>
<feature type="short sequence motif" description="NPA 2">
    <location>
        <begin position="233"/>
        <end position="235"/>
    </location>
</feature>
<feature type="sequence conflict" description="In Ref. 5; EAZ39662." evidence="5" ref="5">
    <original>G</original>
    <variation>C</variation>
    <location>
        <position position="11"/>
    </location>
</feature>
<feature type="sequence conflict" description="In Ref. 1; AAC16545." evidence="5" ref="1">
    <original>A</original>
    <variation>S</variation>
    <location>
        <position position="89"/>
    </location>
</feature>
<feature type="sequence conflict" description="In Ref. 1; AAC16545." evidence="5" ref="1">
    <original>K</original>
    <variation>N</variation>
    <location>
        <position position="149"/>
    </location>
</feature>
<feature type="sequence conflict" description="In Ref. 1; AAC16545." evidence="5" ref="1">
    <original>QS</original>
    <variation>PN</variation>
    <location>
        <begin position="152"/>
        <end position="153"/>
    </location>
</feature>
<protein>
    <recommendedName>
        <fullName>Probable aquaporin PIP2-1</fullName>
    </recommendedName>
    <alternativeName>
        <fullName>OsPIP2;1</fullName>
    </alternativeName>
    <alternativeName>
        <fullName>Plasma membrane intrinsic protein 2-1</fullName>
    </alternativeName>
    <alternativeName>
        <fullName>Plasma membrane intrinsic protein 2a</fullName>
        <shortName>PIP2a</shortName>
    </alternativeName>
</protein>
<dbReference type="EMBL" id="AF062393">
    <property type="protein sequence ID" value="AAC16545.1"/>
    <property type="molecule type" value="mRNA"/>
</dbReference>
<dbReference type="EMBL" id="AP003802">
    <property type="protein sequence ID" value="BAC15868.1"/>
    <property type="molecule type" value="Genomic_DNA"/>
</dbReference>
<dbReference type="EMBL" id="AP008213">
    <property type="protein sequence ID" value="BAF21459.1"/>
    <property type="molecule type" value="Genomic_DNA"/>
</dbReference>
<dbReference type="EMBL" id="AP014963">
    <property type="protein sequence ID" value="BAT01306.1"/>
    <property type="molecule type" value="Genomic_DNA"/>
</dbReference>
<dbReference type="EMBL" id="CM000144">
    <property type="protein sequence ID" value="EAZ39662.1"/>
    <property type="molecule type" value="Genomic_DNA"/>
</dbReference>
<dbReference type="EMBL" id="AK072519">
    <property type="status" value="NOT_ANNOTATED_CDS"/>
    <property type="molecule type" value="mRNA"/>
</dbReference>
<dbReference type="PIR" id="T02879">
    <property type="entry name" value="T02879"/>
</dbReference>
<dbReference type="RefSeq" id="XP_015646828.1">
    <property type="nucleotide sequence ID" value="XM_015791342.1"/>
</dbReference>
<dbReference type="SMR" id="Q8H5N9"/>
<dbReference type="FunCoup" id="Q8H5N9">
    <property type="interactions" value="296"/>
</dbReference>
<dbReference type="STRING" id="39947.Q8H5N9"/>
<dbReference type="PaxDb" id="39947-Q8H5N9"/>
<dbReference type="EnsemblPlants" id="Os07t0448800-01">
    <property type="protein sequence ID" value="Os07t0448800-01"/>
    <property type="gene ID" value="Os07g0448800"/>
</dbReference>
<dbReference type="Gramene" id="Os07t0448800-01">
    <property type="protein sequence ID" value="Os07t0448800-01"/>
    <property type="gene ID" value="Os07g0448800"/>
</dbReference>
<dbReference type="KEGG" id="dosa:Os07g0448800"/>
<dbReference type="eggNOG" id="KOG0223">
    <property type="taxonomic scope" value="Eukaryota"/>
</dbReference>
<dbReference type="HOGENOM" id="CLU_020019_3_0_1"/>
<dbReference type="InParanoid" id="Q8H5N9"/>
<dbReference type="OMA" id="LFITIAW"/>
<dbReference type="OrthoDB" id="3222at2759"/>
<dbReference type="Proteomes" id="UP000000763">
    <property type="component" value="Chromosome 7"/>
</dbReference>
<dbReference type="Proteomes" id="UP000007752">
    <property type="component" value="Chromosome 7"/>
</dbReference>
<dbReference type="Proteomes" id="UP000059680">
    <property type="component" value="Chromosome 7"/>
</dbReference>
<dbReference type="ExpressionAtlas" id="Q8H5N9">
    <property type="expression patterns" value="baseline and differential"/>
</dbReference>
<dbReference type="GO" id="GO:0005886">
    <property type="term" value="C:plasma membrane"/>
    <property type="evidence" value="ECO:0000318"/>
    <property type="project" value="GO_Central"/>
</dbReference>
<dbReference type="GO" id="GO:0015250">
    <property type="term" value="F:water channel activity"/>
    <property type="evidence" value="ECO:0000318"/>
    <property type="project" value="GO_Central"/>
</dbReference>
<dbReference type="CDD" id="cd00333">
    <property type="entry name" value="MIP"/>
    <property type="match status" value="1"/>
</dbReference>
<dbReference type="FunFam" id="1.20.1080.10:FF:000001">
    <property type="entry name" value="Probable aquaporin PIP1-2"/>
    <property type="match status" value="1"/>
</dbReference>
<dbReference type="Gene3D" id="1.20.1080.10">
    <property type="entry name" value="Glycerol uptake facilitator protein"/>
    <property type="match status" value="1"/>
</dbReference>
<dbReference type="InterPro" id="IPR023271">
    <property type="entry name" value="Aquaporin-like"/>
</dbReference>
<dbReference type="InterPro" id="IPR034294">
    <property type="entry name" value="Aquaporin_transptr"/>
</dbReference>
<dbReference type="InterPro" id="IPR000425">
    <property type="entry name" value="MIP"/>
</dbReference>
<dbReference type="InterPro" id="IPR022357">
    <property type="entry name" value="MIP_CS"/>
</dbReference>
<dbReference type="NCBIfam" id="TIGR00861">
    <property type="entry name" value="MIP"/>
    <property type="match status" value="1"/>
</dbReference>
<dbReference type="PANTHER" id="PTHR45687">
    <property type="entry name" value="AQUAPORIN OR AQUAGLYCEROPORIN RELATED"/>
    <property type="match status" value="1"/>
</dbReference>
<dbReference type="Pfam" id="PF00230">
    <property type="entry name" value="MIP"/>
    <property type="match status" value="1"/>
</dbReference>
<dbReference type="PRINTS" id="PR00783">
    <property type="entry name" value="MINTRINSICP"/>
</dbReference>
<dbReference type="SUPFAM" id="SSF81338">
    <property type="entry name" value="Aquaporin-like"/>
    <property type="match status" value="1"/>
</dbReference>
<dbReference type="PROSITE" id="PS00221">
    <property type="entry name" value="MIP"/>
    <property type="match status" value="1"/>
</dbReference>
<sequence>MGKDEVMESGGAAGEFAAKDYTDPPPAPLIDAAELGSWSLYRAVIAEFIATLLFLYITVATVIGYKHQTDASASGADAACGGVGVLGIAWAFGGMIFILVYCTAGISGGHINPAVTFGLFLARKVSLVRAILYIVAQCLGAICGVGLVKAFQSAYFNRYGGGANTLAAGYSKGTGLAAEIIGTFVLVYTVFSATDPKRNARDSHVPVLAPLPIGFAVFMVHLATIPITGTGINPARSIGAAVIFNNEKAWHNHWIFWVGPFVGAAIAAFYHQYILRAGAIKALGSFRSNA</sequence>